<proteinExistence type="inferred from homology"/>
<protein>
    <recommendedName>
        <fullName evidence="1">Valine--tRNA ligase</fullName>
        <ecNumber evidence="1">6.1.1.9</ecNumber>
    </recommendedName>
    <alternativeName>
        <fullName evidence="1">Valyl-tRNA synthetase</fullName>
        <shortName evidence="1">ValRS</shortName>
    </alternativeName>
</protein>
<accession>Q7MHG1</accession>
<reference key="1">
    <citation type="journal article" date="2003" name="Genome Res.">
        <title>Comparative genome analysis of Vibrio vulnificus, a marine pathogen.</title>
        <authorList>
            <person name="Chen C.-Y."/>
            <person name="Wu K.-M."/>
            <person name="Chang Y.-C."/>
            <person name="Chang C.-H."/>
            <person name="Tsai H.-C."/>
            <person name="Liao T.-L."/>
            <person name="Liu Y.-M."/>
            <person name="Chen H.-J."/>
            <person name="Shen A.B.-T."/>
            <person name="Li J.-C."/>
            <person name="Su T.-L."/>
            <person name="Shao C.-P."/>
            <person name="Lee C.-T."/>
            <person name="Hor L.-I."/>
            <person name="Tsai S.-F."/>
        </authorList>
    </citation>
    <scope>NUCLEOTIDE SEQUENCE [LARGE SCALE GENOMIC DNA]</scope>
    <source>
        <strain>YJ016</strain>
    </source>
</reference>
<gene>
    <name evidence="1" type="primary">valS</name>
    <name type="ordered locus">VV2910</name>
</gene>
<comment type="function">
    <text evidence="1">Catalyzes the attachment of valine to tRNA(Val). As ValRS can inadvertently accommodate and process structurally similar amino acids such as threonine, to avoid such errors, it has a 'posttransfer' editing activity that hydrolyzes mischarged Thr-tRNA(Val) in a tRNA-dependent manner.</text>
</comment>
<comment type="catalytic activity">
    <reaction evidence="1">
        <text>tRNA(Val) + L-valine + ATP = L-valyl-tRNA(Val) + AMP + diphosphate</text>
        <dbReference type="Rhea" id="RHEA:10704"/>
        <dbReference type="Rhea" id="RHEA-COMP:9672"/>
        <dbReference type="Rhea" id="RHEA-COMP:9708"/>
        <dbReference type="ChEBI" id="CHEBI:30616"/>
        <dbReference type="ChEBI" id="CHEBI:33019"/>
        <dbReference type="ChEBI" id="CHEBI:57762"/>
        <dbReference type="ChEBI" id="CHEBI:78442"/>
        <dbReference type="ChEBI" id="CHEBI:78537"/>
        <dbReference type="ChEBI" id="CHEBI:456215"/>
        <dbReference type="EC" id="6.1.1.9"/>
    </reaction>
</comment>
<comment type="subunit">
    <text evidence="1">Monomer.</text>
</comment>
<comment type="subcellular location">
    <subcellularLocation>
        <location evidence="1">Cytoplasm</location>
    </subcellularLocation>
</comment>
<comment type="domain">
    <text evidence="1">ValRS has two distinct active sites: one for aminoacylation and one for editing. The misactivated threonine is translocated from the active site to the editing site.</text>
</comment>
<comment type="domain">
    <text evidence="1">The C-terminal coiled-coil domain is crucial for aminoacylation activity.</text>
</comment>
<comment type="similarity">
    <text evidence="1">Belongs to the class-I aminoacyl-tRNA synthetase family. ValS type 1 subfamily.</text>
</comment>
<keyword id="KW-0030">Aminoacyl-tRNA synthetase</keyword>
<keyword id="KW-0067">ATP-binding</keyword>
<keyword id="KW-0175">Coiled coil</keyword>
<keyword id="KW-0963">Cytoplasm</keyword>
<keyword id="KW-0436">Ligase</keyword>
<keyword id="KW-0547">Nucleotide-binding</keyword>
<keyword id="KW-0648">Protein biosynthesis</keyword>
<dbReference type="EC" id="6.1.1.9" evidence="1"/>
<dbReference type="EMBL" id="BA000037">
    <property type="protein sequence ID" value="BAC95674.1"/>
    <property type="molecule type" value="Genomic_DNA"/>
</dbReference>
<dbReference type="RefSeq" id="WP_011079431.1">
    <property type="nucleotide sequence ID" value="NC_005139.1"/>
</dbReference>
<dbReference type="SMR" id="Q7MHG1"/>
<dbReference type="STRING" id="672.VV93_v1c26340"/>
<dbReference type="KEGG" id="vvy:VV2910"/>
<dbReference type="eggNOG" id="COG0525">
    <property type="taxonomic scope" value="Bacteria"/>
</dbReference>
<dbReference type="HOGENOM" id="CLU_001493_0_2_6"/>
<dbReference type="Proteomes" id="UP000002675">
    <property type="component" value="Chromosome I"/>
</dbReference>
<dbReference type="GO" id="GO:0005829">
    <property type="term" value="C:cytosol"/>
    <property type="evidence" value="ECO:0007669"/>
    <property type="project" value="TreeGrafter"/>
</dbReference>
<dbReference type="GO" id="GO:0002161">
    <property type="term" value="F:aminoacyl-tRNA deacylase activity"/>
    <property type="evidence" value="ECO:0007669"/>
    <property type="project" value="InterPro"/>
</dbReference>
<dbReference type="GO" id="GO:0005524">
    <property type="term" value="F:ATP binding"/>
    <property type="evidence" value="ECO:0007669"/>
    <property type="project" value="UniProtKB-UniRule"/>
</dbReference>
<dbReference type="GO" id="GO:0004832">
    <property type="term" value="F:valine-tRNA ligase activity"/>
    <property type="evidence" value="ECO:0007669"/>
    <property type="project" value="UniProtKB-UniRule"/>
</dbReference>
<dbReference type="GO" id="GO:0006438">
    <property type="term" value="P:valyl-tRNA aminoacylation"/>
    <property type="evidence" value="ECO:0007669"/>
    <property type="project" value="UniProtKB-UniRule"/>
</dbReference>
<dbReference type="CDD" id="cd07962">
    <property type="entry name" value="Anticodon_Ia_Val"/>
    <property type="match status" value="1"/>
</dbReference>
<dbReference type="CDD" id="cd00817">
    <property type="entry name" value="ValRS_core"/>
    <property type="match status" value="1"/>
</dbReference>
<dbReference type="FunFam" id="1.10.287.380:FF:000001">
    <property type="entry name" value="Valine--tRNA ligase"/>
    <property type="match status" value="1"/>
</dbReference>
<dbReference type="FunFam" id="1.10.730.10:FF:000007">
    <property type="entry name" value="Valine--tRNA ligase"/>
    <property type="match status" value="1"/>
</dbReference>
<dbReference type="FunFam" id="3.40.50.620:FF:000146">
    <property type="entry name" value="Valine--tRNA ligase"/>
    <property type="match status" value="1"/>
</dbReference>
<dbReference type="FunFam" id="3.90.740.10:FF:000003">
    <property type="entry name" value="Valine--tRNA ligase"/>
    <property type="match status" value="1"/>
</dbReference>
<dbReference type="FunFam" id="3.90.740.10:FF:000004">
    <property type="entry name" value="Valine--tRNA ligase"/>
    <property type="match status" value="1"/>
</dbReference>
<dbReference type="FunFam" id="3.40.50.620:FF:000020">
    <property type="entry name" value="Valine--tRNA ligase, mitochondrial"/>
    <property type="match status" value="1"/>
</dbReference>
<dbReference type="Gene3D" id="3.40.50.620">
    <property type="entry name" value="HUPs"/>
    <property type="match status" value="2"/>
</dbReference>
<dbReference type="Gene3D" id="1.10.730.10">
    <property type="entry name" value="Isoleucyl-tRNA Synthetase, Domain 1"/>
    <property type="match status" value="1"/>
</dbReference>
<dbReference type="Gene3D" id="1.10.287.380">
    <property type="entry name" value="Valyl-tRNA synthetase, C-terminal domain"/>
    <property type="match status" value="1"/>
</dbReference>
<dbReference type="Gene3D" id="3.90.740.10">
    <property type="entry name" value="Valyl/Leucyl/Isoleucyl-tRNA synthetase, editing domain"/>
    <property type="match status" value="1"/>
</dbReference>
<dbReference type="HAMAP" id="MF_02004">
    <property type="entry name" value="Val_tRNA_synth_type1"/>
    <property type="match status" value="1"/>
</dbReference>
<dbReference type="InterPro" id="IPR001412">
    <property type="entry name" value="aa-tRNA-synth_I_CS"/>
</dbReference>
<dbReference type="InterPro" id="IPR002300">
    <property type="entry name" value="aa-tRNA-synth_Ia"/>
</dbReference>
<dbReference type="InterPro" id="IPR033705">
    <property type="entry name" value="Anticodon_Ia_Val"/>
</dbReference>
<dbReference type="InterPro" id="IPR013155">
    <property type="entry name" value="M/V/L/I-tRNA-synth_anticd-bd"/>
</dbReference>
<dbReference type="InterPro" id="IPR014729">
    <property type="entry name" value="Rossmann-like_a/b/a_fold"/>
</dbReference>
<dbReference type="InterPro" id="IPR010978">
    <property type="entry name" value="tRNA-bd_arm"/>
</dbReference>
<dbReference type="InterPro" id="IPR009080">
    <property type="entry name" value="tRNAsynth_Ia_anticodon-bd"/>
</dbReference>
<dbReference type="InterPro" id="IPR037118">
    <property type="entry name" value="Val-tRNA_synth_C_sf"/>
</dbReference>
<dbReference type="InterPro" id="IPR019499">
    <property type="entry name" value="Val-tRNA_synth_tRNA-bd"/>
</dbReference>
<dbReference type="InterPro" id="IPR009008">
    <property type="entry name" value="Val/Leu/Ile-tRNA-synth_edit"/>
</dbReference>
<dbReference type="InterPro" id="IPR002303">
    <property type="entry name" value="Valyl-tRNA_ligase"/>
</dbReference>
<dbReference type="NCBIfam" id="NF004349">
    <property type="entry name" value="PRK05729.1"/>
    <property type="match status" value="1"/>
</dbReference>
<dbReference type="NCBIfam" id="TIGR00422">
    <property type="entry name" value="valS"/>
    <property type="match status" value="1"/>
</dbReference>
<dbReference type="PANTHER" id="PTHR11946:SF93">
    <property type="entry name" value="VALINE--TRNA LIGASE, CHLOROPLASTIC_MITOCHONDRIAL 2"/>
    <property type="match status" value="1"/>
</dbReference>
<dbReference type="PANTHER" id="PTHR11946">
    <property type="entry name" value="VALYL-TRNA SYNTHETASES"/>
    <property type="match status" value="1"/>
</dbReference>
<dbReference type="Pfam" id="PF08264">
    <property type="entry name" value="Anticodon_1"/>
    <property type="match status" value="1"/>
</dbReference>
<dbReference type="Pfam" id="PF00133">
    <property type="entry name" value="tRNA-synt_1"/>
    <property type="match status" value="1"/>
</dbReference>
<dbReference type="Pfam" id="PF10458">
    <property type="entry name" value="Val_tRNA-synt_C"/>
    <property type="match status" value="1"/>
</dbReference>
<dbReference type="PRINTS" id="PR00986">
    <property type="entry name" value="TRNASYNTHVAL"/>
</dbReference>
<dbReference type="SUPFAM" id="SSF47323">
    <property type="entry name" value="Anticodon-binding domain of a subclass of class I aminoacyl-tRNA synthetases"/>
    <property type="match status" value="1"/>
</dbReference>
<dbReference type="SUPFAM" id="SSF52374">
    <property type="entry name" value="Nucleotidylyl transferase"/>
    <property type="match status" value="1"/>
</dbReference>
<dbReference type="SUPFAM" id="SSF46589">
    <property type="entry name" value="tRNA-binding arm"/>
    <property type="match status" value="1"/>
</dbReference>
<dbReference type="SUPFAM" id="SSF50677">
    <property type="entry name" value="ValRS/IleRS/LeuRS editing domain"/>
    <property type="match status" value="1"/>
</dbReference>
<dbReference type="PROSITE" id="PS00178">
    <property type="entry name" value="AA_TRNA_LIGASE_I"/>
    <property type="match status" value="1"/>
</dbReference>
<name>SYV_VIBVY</name>
<feature type="chain" id="PRO_0000224595" description="Valine--tRNA ligase">
    <location>
        <begin position="1"/>
        <end position="951"/>
    </location>
</feature>
<feature type="coiled-coil region" evidence="1">
    <location>
        <begin position="882"/>
        <end position="951"/>
    </location>
</feature>
<feature type="short sequence motif" description="'HIGH' region">
    <location>
        <begin position="42"/>
        <end position="52"/>
    </location>
</feature>
<feature type="short sequence motif" description="'KMSKS' region">
    <location>
        <begin position="554"/>
        <end position="558"/>
    </location>
</feature>
<feature type="binding site" evidence="1">
    <location>
        <position position="557"/>
    </location>
    <ligand>
        <name>ATP</name>
        <dbReference type="ChEBI" id="CHEBI:30616"/>
    </ligand>
</feature>
<sequence>MEKTYNPTSIEQDLYKTWEEQGYFKPHGDTSKESYSIMIPPPNVTGSLHMGHAFQDTIMDTLIRCERMKGKNTLWQVGTDHAGIATQMVVERKIAAEEGKTKHDYGREAFIDKIWEWKGESGGTITKQLRRLGASVDWDRERFTMDDGLSNAVQEVFVRLYEDDLIYRGKRLVNWDPKLHTAISDLEVENKDTKGHMWHFRYPLADGVKTADGKDYIVVATTRPETMLGDTGVAVNPEDPRYQDLIGKDIILPIVDRRIPIVGDEHADMEKGTGCVKITPAHDFNDYEVGKRHQLPMINILTFDANIRDAAEVFTTNGEPSDAYGTELPAKYHGMERFAARKAIVAEFDELGLLEEVKDHDLQVPYGDRGGVVIEPMLTDQWYVRTAPLAKTAVEAVENGDIQFVPKQYENMYFSWMRDVQDWCISRQLWWGHRIPAWYDNQGNVYVGRSEEEVRQNHNLESVIELHQDEDVLDTWFSSALWTFGTQGWPEQTDDLKVFHPSDVLVTGFDIIFFWVARMIMMTMHFVKDENGKPQVPFKTVYVTGLIRDENGDKMSKSKGNVLDPIDMIDGIDLESLVEKRTGNMMQPQLAAKIEKNTRKTFENGIEAYGTDALRFTLAAMASTGRDINWDMKRLEGYRNFCNKLWNASRYVMMNTEEQDCGFGAGEIEYSLADKWIESQFELAAKAFNNHIDNYRLDMAANTLYEFIWNQFCDWYLELTKPVLWKGTEAQQRGTRRTLITVLEKTLRLAHPVIPYITETIWQSIKPLVDGVEGETIMLQSLPQYDEANFNQEALDDIEWVKAFITSIRNLRAEYDINPGKPLEVMLKADEKDAARLEANKQVLMSLAKLESVRVLAAGEETPACATALVAKSELMIPMAGLIDKDAELARLDKEVAKTQGEIKRIEGKLGNEGFVAKAPEAVIAKEREKLEGYQETLAKLEEQKATIAAL</sequence>
<organism>
    <name type="scientific">Vibrio vulnificus (strain YJ016)</name>
    <dbReference type="NCBI Taxonomy" id="196600"/>
    <lineage>
        <taxon>Bacteria</taxon>
        <taxon>Pseudomonadati</taxon>
        <taxon>Pseudomonadota</taxon>
        <taxon>Gammaproteobacteria</taxon>
        <taxon>Vibrionales</taxon>
        <taxon>Vibrionaceae</taxon>
        <taxon>Vibrio</taxon>
    </lineage>
</organism>
<evidence type="ECO:0000255" key="1">
    <source>
        <dbReference type="HAMAP-Rule" id="MF_02004"/>
    </source>
</evidence>